<protein>
    <recommendedName>
        <fullName evidence="12">Splicing regulator ARVCF</fullName>
    </recommendedName>
    <alternativeName>
        <fullName evidence="12">Armadillo repeat protein deleted in velo-cardio-facial syndrome</fullName>
    </alternativeName>
</protein>
<accession>O00192</accession>
<accession>B7WNV2</accession>
<feature type="chain" id="PRO_0000064294" description="Splicing regulator ARVCF">
    <location>
        <begin position="1"/>
        <end position="962"/>
    </location>
</feature>
<feature type="repeat" description="ARM 1">
    <location>
        <begin position="348"/>
        <end position="387"/>
    </location>
</feature>
<feature type="repeat" description="ARM 2">
    <location>
        <begin position="390"/>
        <end position="429"/>
    </location>
</feature>
<feature type="repeat" description="ARM 3">
    <location>
        <begin position="433"/>
        <end position="467"/>
    </location>
</feature>
<feature type="repeat" description="ARM 4">
    <location>
        <begin position="468"/>
        <end position="508"/>
    </location>
</feature>
<feature type="repeat" description="ARM 5">
    <location>
        <begin position="526"/>
        <end position="565"/>
    </location>
</feature>
<feature type="repeat" description="ARM 6">
    <location>
        <begin position="575"/>
        <end position="622"/>
    </location>
</feature>
<feature type="repeat" description="ARM 7">
    <location>
        <begin position="646"/>
        <end position="686"/>
    </location>
</feature>
<feature type="repeat" description="ARM 8">
    <location>
        <begin position="699"/>
        <end position="738"/>
    </location>
</feature>
<feature type="repeat" description="ARM 9">
    <location>
        <begin position="739"/>
        <end position="781"/>
    </location>
</feature>
<feature type="repeat" description="ARM 10">
    <location>
        <begin position="782"/>
        <end position="826"/>
    </location>
</feature>
<feature type="region of interest" description="Disordered" evidence="4">
    <location>
        <begin position="95"/>
        <end position="122"/>
    </location>
</feature>
<feature type="region of interest" description="Disordered" evidence="4">
    <location>
        <begin position="186"/>
        <end position="253"/>
    </location>
</feature>
<feature type="region of interest" description="Disordered" evidence="4">
    <location>
        <begin position="266"/>
        <end position="290"/>
    </location>
</feature>
<feature type="region of interest" description="Disordered" evidence="4">
    <location>
        <begin position="590"/>
        <end position="614"/>
    </location>
</feature>
<feature type="region of interest" description="Required for interaction with RNA-binding proteins DDX5, HNRNPH2 and SRSF1 and with mRNAs" evidence="7">
    <location>
        <begin position="776"/>
        <end position="962"/>
    </location>
</feature>
<feature type="region of interest" description="Disordered" evidence="4">
    <location>
        <begin position="854"/>
        <end position="962"/>
    </location>
</feature>
<feature type="coiled-coil region" evidence="3">
    <location>
        <begin position="8"/>
        <end position="46"/>
    </location>
</feature>
<feature type="short sequence motif" description="Nuclear localization signal" evidence="3">
    <location>
        <begin position="607"/>
        <end position="623"/>
    </location>
</feature>
<feature type="compositionally biased region" description="Polar residues" evidence="4">
    <location>
        <begin position="102"/>
        <end position="114"/>
    </location>
</feature>
<feature type="compositionally biased region" description="Low complexity" evidence="4">
    <location>
        <begin position="206"/>
        <end position="217"/>
    </location>
</feature>
<feature type="compositionally biased region" description="Acidic residues" evidence="4">
    <location>
        <begin position="270"/>
        <end position="280"/>
    </location>
</feature>
<feature type="compositionally biased region" description="Basic and acidic residues" evidence="4">
    <location>
        <begin position="878"/>
        <end position="887"/>
    </location>
</feature>
<feature type="compositionally biased region" description="Basic and acidic residues" evidence="4">
    <location>
        <begin position="920"/>
        <end position="932"/>
    </location>
</feature>
<feature type="modified residue" description="Phosphothreonine" evidence="19">
    <location>
        <position position="102"/>
    </location>
</feature>
<feature type="modified residue" description="Phosphothreonine" evidence="19">
    <location>
        <position position="104"/>
    </location>
</feature>
<feature type="modified residue" description="Omega-N-methylarginine" evidence="2">
    <location>
        <position position="170"/>
    </location>
</feature>
<feature type="modified residue" description="Phosphoserine" evidence="19">
    <location>
        <position position="267"/>
    </location>
</feature>
<feature type="modified residue" description="Phosphoserine" evidence="19">
    <location>
        <position position="332"/>
    </location>
</feature>
<feature type="modified residue" description="Phosphoserine" evidence="19">
    <location>
        <position position="335"/>
    </location>
</feature>
<feature type="modified residue" description="Phosphoserine" evidence="19">
    <location>
        <position position="343"/>
    </location>
</feature>
<feature type="modified residue" description="Phosphoserine" evidence="19">
    <location>
        <position position="345"/>
    </location>
</feature>
<feature type="modified residue" description="Phosphoserine" evidence="19">
    <location>
        <position position="606"/>
    </location>
</feature>
<feature type="modified residue" description="Phosphothreonine" evidence="18 19">
    <location>
        <position position="642"/>
    </location>
</feature>
<feature type="modified residue" description="Phosphoserine" evidence="15 17 18">
    <location>
        <position position="864"/>
    </location>
</feature>
<feature type="modified residue" description="Phosphoserine" evidence="16">
    <location>
        <position position="871"/>
    </location>
</feature>
<feature type="modified residue" description="Phosphothreonine" evidence="16">
    <location>
        <position position="872"/>
    </location>
</feature>
<feature type="modified residue" description="Phosphoserine" evidence="18">
    <location>
        <position position="915"/>
    </location>
</feature>
<feature type="splice variant" id="VSP_006739" description="In isoform Short." evidence="11">
    <original>MEDCNVHSAASILASVKEQEARFERLTRALEQERRHVALQLERAQQPGMVSGGMGSGQPLPMAWQQLVL</original>
    <variation>MPAELR</variation>
    <location>
        <begin position="1"/>
        <end position="69"/>
    </location>
</feature>
<feature type="sequence variant" id="VAR_020408" description="In dbSNP:rs2240717.">
    <original>V</original>
    <variation>A</variation>
    <location>
        <position position="175"/>
    </location>
</feature>
<feature type="sequence variant" id="VAR_033529" description="In dbSNP:rs2073748.">
    <original>P</original>
    <variation>L</variation>
    <location>
        <position position="220"/>
    </location>
</feature>
<feature type="sequence variant" id="VAR_053812" description="In dbSNP:rs16982871.">
    <original>R</original>
    <variation>Q</variation>
    <location>
        <position position="539"/>
    </location>
</feature>
<feature type="sequence variant" id="VAR_024692" description="In dbSNP:rs165815." evidence="16">
    <original>R</original>
    <variation>Q</variation>
    <location>
        <position position="906"/>
    </location>
</feature>
<feature type="sequence variant" id="VAR_033531" description="In dbSNP:rs34638476.">
    <original>R</original>
    <variation>Q</variation>
    <location>
        <position position="909"/>
    </location>
</feature>
<feature type="sequence variant" id="VAR_033530" description="In dbSNP:rs34687532.">
    <original>R</original>
    <variation>W</variation>
    <location>
        <position position="909"/>
    </location>
</feature>
<feature type="sequence variant" id="VAR_033532" description="In dbSNP:rs34445280.">
    <original>R</original>
    <variation>W</variation>
    <location>
        <position position="912"/>
    </location>
</feature>
<dbReference type="EMBL" id="U51269">
    <property type="protein sequence ID" value="AAC51202.1"/>
    <property type="molecule type" value="mRNA"/>
</dbReference>
<dbReference type="EMBL" id="AC005663">
    <property type="status" value="NOT_ANNOTATED_CDS"/>
    <property type="molecule type" value="Genomic_DNA"/>
</dbReference>
<dbReference type="CCDS" id="CCDS13771.1">
    <molecule id="O00192-1"/>
</dbReference>
<dbReference type="RefSeq" id="NP_001661.1">
    <molecule id="O00192-1"/>
    <property type="nucleotide sequence ID" value="NM_001670.3"/>
</dbReference>
<dbReference type="RefSeq" id="XP_006724310.1">
    <property type="nucleotide sequence ID" value="XM_006724247.3"/>
</dbReference>
<dbReference type="RefSeq" id="XP_011528482.1">
    <molecule id="O00192-1"/>
    <property type="nucleotide sequence ID" value="XM_011530180.2"/>
</dbReference>
<dbReference type="RefSeq" id="XP_047297323.1">
    <molecule id="O00192-1"/>
    <property type="nucleotide sequence ID" value="XM_047441367.1"/>
</dbReference>
<dbReference type="RefSeq" id="XP_047297328.1">
    <molecule id="O00192-2"/>
    <property type="nucleotide sequence ID" value="XM_047441372.1"/>
</dbReference>
<dbReference type="SMR" id="O00192"/>
<dbReference type="BioGRID" id="106914">
    <property type="interactions" value="60"/>
</dbReference>
<dbReference type="FunCoup" id="O00192">
    <property type="interactions" value="788"/>
</dbReference>
<dbReference type="IntAct" id="O00192">
    <property type="interactions" value="32"/>
</dbReference>
<dbReference type="MINT" id="O00192"/>
<dbReference type="STRING" id="9606.ENSP00000263207"/>
<dbReference type="GlyGen" id="O00192">
    <property type="glycosylation" value="2 sites, 2 N-linked glycans (2 sites)"/>
</dbReference>
<dbReference type="iPTMnet" id="O00192"/>
<dbReference type="PhosphoSitePlus" id="O00192"/>
<dbReference type="SwissPalm" id="O00192"/>
<dbReference type="BioMuta" id="ARVCF"/>
<dbReference type="jPOST" id="O00192"/>
<dbReference type="MassIVE" id="O00192"/>
<dbReference type="PaxDb" id="9606-ENSP00000263207"/>
<dbReference type="PeptideAtlas" id="O00192"/>
<dbReference type="ProteomicsDB" id="47770">
    <molecule id="O00192-1"/>
</dbReference>
<dbReference type="ProteomicsDB" id="47771">
    <molecule id="O00192-2"/>
</dbReference>
<dbReference type="Pumba" id="O00192"/>
<dbReference type="Antibodypedia" id="4255">
    <property type="antibodies" value="87 antibodies from 23 providers"/>
</dbReference>
<dbReference type="DNASU" id="421"/>
<dbReference type="Ensembl" id="ENST00000263207.8">
    <molecule id="O00192-1"/>
    <property type="protein sequence ID" value="ENSP00000263207.3"/>
    <property type="gene ID" value="ENSG00000099889.14"/>
</dbReference>
<dbReference type="Ensembl" id="ENST00000401994.5">
    <molecule id="O00192-2"/>
    <property type="protein sequence ID" value="ENSP00000384341.1"/>
    <property type="gene ID" value="ENSG00000099889.14"/>
</dbReference>
<dbReference type="GeneID" id="421"/>
<dbReference type="KEGG" id="hsa:421"/>
<dbReference type="MANE-Select" id="ENST00000263207.8">
    <property type="protein sequence ID" value="ENSP00000263207.3"/>
    <property type="RefSeq nucleotide sequence ID" value="NM_001670.3"/>
    <property type="RefSeq protein sequence ID" value="NP_001661.1"/>
</dbReference>
<dbReference type="UCSC" id="uc002zqz.4">
    <molecule id="O00192-1"/>
    <property type="organism name" value="human"/>
</dbReference>
<dbReference type="AGR" id="HGNC:728"/>
<dbReference type="CTD" id="421"/>
<dbReference type="DisGeNET" id="421"/>
<dbReference type="GeneCards" id="ARVCF"/>
<dbReference type="HGNC" id="HGNC:728">
    <property type="gene designation" value="ARVCF"/>
</dbReference>
<dbReference type="HPA" id="ENSG00000099889">
    <property type="expression patterns" value="Tissue enhanced (brain)"/>
</dbReference>
<dbReference type="MalaCards" id="ARVCF"/>
<dbReference type="MIM" id="602269">
    <property type="type" value="gene"/>
</dbReference>
<dbReference type="neXtProt" id="NX_O00192"/>
<dbReference type="OpenTargets" id="ENSG00000099889"/>
<dbReference type="Orphanet" id="567">
    <property type="disease" value="22q11.2 deletion syndrome"/>
</dbReference>
<dbReference type="PharmGKB" id="PA25018"/>
<dbReference type="VEuPathDB" id="HostDB:ENSG00000099889"/>
<dbReference type="eggNOG" id="KOG1048">
    <property type="taxonomic scope" value="Eukaryota"/>
</dbReference>
<dbReference type="GeneTree" id="ENSGT00940000157027"/>
<dbReference type="HOGENOM" id="CLU_009111_1_0_1"/>
<dbReference type="InParanoid" id="O00192"/>
<dbReference type="OMA" id="XFELLYQ"/>
<dbReference type="OrthoDB" id="3245100at2759"/>
<dbReference type="PAN-GO" id="O00192">
    <property type="GO annotations" value="7 GO annotations based on evolutionary models"/>
</dbReference>
<dbReference type="PhylomeDB" id="O00192"/>
<dbReference type="TreeFam" id="TF321877"/>
<dbReference type="PathwayCommons" id="O00192"/>
<dbReference type="SignaLink" id="O00192"/>
<dbReference type="SIGNOR" id="O00192"/>
<dbReference type="BioGRID-ORCS" id="421">
    <property type="hits" value="21 hits in 1164 CRISPR screens"/>
</dbReference>
<dbReference type="ChiTaRS" id="ARVCF">
    <property type="organism name" value="human"/>
</dbReference>
<dbReference type="GeneWiki" id="ARVCF"/>
<dbReference type="GenomeRNAi" id="421"/>
<dbReference type="Pharos" id="O00192">
    <property type="development level" value="Tbio"/>
</dbReference>
<dbReference type="PRO" id="PR:O00192"/>
<dbReference type="Proteomes" id="UP000005640">
    <property type="component" value="Chromosome 22"/>
</dbReference>
<dbReference type="RNAct" id="O00192">
    <property type="molecule type" value="protein"/>
</dbReference>
<dbReference type="Bgee" id="ENSG00000099889">
    <property type="expression patterns" value="Expressed in cerebellar hemisphere and 191 other cell types or tissues"/>
</dbReference>
<dbReference type="ExpressionAtlas" id="O00192">
    <property type="expression patterns" value="baseline and differential"/>
</dbReference>
<dbReference type="GO" id="GO:0005912">
    <property type="term" value="C:adherens junction"/>
    <property type="evidence" value="ECO:0000314"/>
    <property type="project" value="UniProtKB"/>
</dbReference>
<dbReference type="GO" id="GO:0005737">
    <property type="term" value="C:cytoplasm"/>
    <property type="evidence" value="ECO:0000314"/>
    <property type="project" value="UniProtKB"/>
</dbReference>
<dbReference type="GO" id="GO:0005634">
    <property type="term" value="C:nucleus"/>
    <property type="evidence" value="ECO:0000314"/>
    <property type="project" value="UniProtKB"/>
</dbReference>
<dbReference type="GO" id="GO:0005886">
    <property type="term" value="C:plasma membrane"/>
    <property type="evidence" value="ECO:0000318"/>
    <property type="project" value="GO_Central"/>
</dbReference>
<dbReference type="GO" id="GO:0045296">
    <property type="term" value="F:cadherin binding"/>
    <property type="evidence" value="ECO:0000353"/>
    <property type="project" value="UniProtKB"/>
</dbReference>
<dbReference type="GO" id="GO:0007155">
    <property type="term" value="P:cell adhesion"/>
    <property type="evidence" value="ECO:0000304"/>
    <property type="project" value="ProtInc"/>
</dbReference>
<dbReference type="GO" id="GO:0098609">
    <property type="term" value="P:cell-cell adhesion"/>
    <property type="evidence" value="ECO:0000318"/>
    <property type="project" value="GO_Central"/>
</dbReference>
<dbReference type="GO" id="GO:0006397">
    <property type="term" value="P:mRNA processing"/>
    <property type="evidence" value="ECO:0007669"/>
    <property type="project" value="UniProtKB-KW"/>
</dbReference>
<dbReference type="GO" id="GO:0008380">
    <property type="term" value="P:RNA splicing"/>
    <property type="evidence" value="ECO:0000315"/>
    <property type="project" value="UniProtKB"/>
</dbReference>
<dbReference type="FunFam" id="1.25.10.10:FF:000007">
    <property type="entry name" value="ARVCF, delta catenin family member"/>
    <property type="match status" value="1"/>
</dbReference>
<dbReference type="Gene3D" id="1.25.10.10">
    <property type="entry name" value="Leucine-rich Repeat Variant"/>
    <property type="match status" value="1"/>
</dbReference>
<dbReference type="InterPro" id="IPR011989">
    <property type="entry name" value="ARM-like"/>
</dbReference>
<dbReference type="InterPro" id="IPR016024">
    <property type="entry name" value="ARM-type_fold"/>
</dbReference>
<dbReference type="InterPro" id="IPR000225">
    <property type="entry name" value="Armadillo"/>
</dbReference>
<dbReference type="InterPro" id="IPR028435">
    <property type="entry name" value="Plakophilin/d_Catenin"/>
</dbReference>
<dbReference type="PANTHER" id="PTHR10372">
    <property type="entry name" value="PLAKOPHILLIN-RELATED"/>
    <property type="match status" value="1"/>
</dbReference>
<dbReference type="PANTHER" id="PTHR10372:SF5">
    <property type="entry name" value="SPLICING REGULATOR ARVCF"/>
    <property type="match status" value="1"/>
</dbReference>
<dbReference type="Pfam" id="PF00514">
    <property type="entry name" value="Arm"/>
    <property type="match status" value="4"/>
</dbReference>
<dbReference type="SMART" id="SM00185">
    <property type="entry name" value="ARM"/>
    <property type="match status" value="6"/>
</dbReference>
<dbReference type="SUPFAM" id="SSF48371">
    <property type="entry name" value="ARM repeat"/>
    <property type="match status" value="1"/>
</dbReference>
<dbReference type="PROSITE" id="PS50176">
    <property type="entry name" value="ARM_REPEAT"/>
    <property type="match status" value="3"/>
</dbReference>
<comment type="function">
    <text evidence="7">Contributes to the regulation of alternative splicing of pre-mRNAs.</text>
</comment>
<comment type="subunit">
    <text evidence="6 7 8">Component of a ribonucleoprotein complex containing mRNAs and RNA-binding proteins including DDX5, HNRNPH2 and SRSF1 as well as ARVCF (PubMed:24644279). Interacts (via the extreme C-terminus) with FRMPD2 (via the PDZ 2 domain) (PubMed:19706687). Interacts with CCDC85B (PubMed:25009281).</text>
</comment>
<comment type="subcellular location">
    <subcellularLocation>
        <location evidence="5 7 13">Cell junction</location>
        <location evidence="5 7 13">Adherens junction</location>
    </subcellularLocation>
    <subcellularLocation>
        <location evidence="5 7">Nucleus</location>
    </subcellularLocation>
    <subcellularLocation>
        <location evidence="7">Cytoplasm</location>
    </subcellularLocation>
    <text evidence="1">In heart, localizes at area composita, the mixed-type junctional structure composed of both desmosomal and adherens junctional proteins.</text>
</comment>
<comment type="alternative products">
    <event type="alternative splicing"/>
    <isoform>
        <id>O00192-1</id>
        <name>Long</name>
        <sequence type="displayed"/>
    </isoform>
    <isoform>
        <id>O00192-2</id>
        <name>Short</name>
        <sequence type="described" ref="VSP_006739"/>
    </isoform>
</comment>
<comment type="tissue specificity">
    <text evidence="5 9 10">Found in all the examined tissues including heart, brain, liver and kidney. Found at low level in lung. Expressed in dermal connective tissue, salivary gland duct and in the corneal layer (at protein level) (PubMed:30479852). Expressed in arrector pili muscle (at protein level) (PubMed:29034528). High levels detected in epithelial cells with lower levels found in fibroblasts and T lymphocytes (PubMed:10725230).</text>
</comment>
<comment type="similarity">
    <text evidence="12">Belongs to the beta-catenin family.</text>
</comment>
<name>ARVC_HUMAN</name>
<gene>
    <name evidence="14" type="primary">ARVCF</name>
</gene>
<keyword id="KW-0025">Alternative splicing</keyword>
<keyword id="KW-0130">Cell adhesion</keyword>
<keyword id="KW-0965">Cell junction</keyword>
<keyword id="KW-0175">Coiled coil</keyword>
<keyword id="KW-0963">Cytoplasm</keyword>
<keyword id="KW-0488">Methylation</keyword>
<keyword id="KW-0507">mRNA processing</keyword>
<keyword id="KW-0508">mRNA splicing</keyword>
<keyword id="KW-0539">Nucleus</keyword>
<keyword id="KW-0597">Phosphoprotein</keyword>
<keyword id="KW-1267">Proteomics identification</keyword>
<keyword id="KW-1185">Reference proteome</keyword>
<keyword id="KW-0677">Repeat</keyword>
<organism>
    <name type="scientific">Homo sapiens</name>
    <name type="common">Human</name>
    <dbReference type="NCBI Taxonomy" id="9606"/>
    <lineage>
        <taxon>Eukaryota</taxon>
        <taxon>Metazoa</taxon>
        <taxon>Chordata</taxon>
        <taxon>Craniata</taxon>
        <taxon>Vertebrata</taxon>
        <taxon>Euteleostomi</taxon>
        <taxon>Mammalia</taxon>
        <taxon>Eutheria</taxon>
        <taxon>Euarchontoglires</taxon>
        <taxon>Primates</taxon>
        <taxon>Haplorrhini</taxon>
        <taxon>Catarrhini</taxon>
        <taxon>Hominidae</taxon>
        <taxon>Homo</taxon>
    </lineage>
</organism>
<evidence type="ECO:0000250" key="1">
    <source>
        <dbReference type="UniProtKB" id="B4F7F3"/>
    </source>
</evidence>
<evidence type="ECO:0000250" key="2">
    <source>
        <dbReference type="UniProtKB" id="P98203"/>
    </source>
</evidence>
<evidence type="ECO:0000255" key="3"/>
<evidence type="ECO:0000256" key="4">
    <source>
        <dbReference type="SAM" id="MobiDB-lite"/>
    </source>
</evidence>
<evidence type="ECO:0000269" key="5">
    <source>
    </source>
</evidence>
<evidence type="ECO:0000269" key="6">
    <source>
    </source>
</evidence>
<evidence type="ECO:0000269" key="7">
    <source>
    </source>
</evidence>
<evidence type="ECO:0000269" key="8">
    <source>
    </source>
</evidence>
<evidence type="ECO:0000269" key="9">
    <source>
    </source>
</evidence>
<evidence type="ECO:0000269" key="10">
    <source>
    </source>
</evidence>
<evidence type="ECO:0000303" key="11">
    <source>
    </source>
</evidence>
<evidence type="ECO:0000305" key="12"/>
<evidence type="ECO:0000305" key="13">
    <source>
    </source>
</evidence>
<evidence type="ECO:0000312" key="14">
    <source>
        <dbReference type="HGNC" id="HGNC:728"/>
    </source>
</evidence>
<evidence type="ECO:0007744" key="15">
    <source>
    </source>
</evidence>
<evidence type="ECO:0007744" key="16">
    <source>
    </source>
</evidence>
<evidence type="ECO:0007744" key="17">
    <source>
    </source>
</evidence>
<evidence type="ECO:0007744" key="18">
    <source>
    </source>
</evidence>
<evidence type="ECO:0007744" key="19">
    <source>
    </source>
</evidence>
<sequence length="962" mass="104642">MEDCNVHSAASILASVKEQEARFERLTRALEQERRHVALQLERAQQPGMVSGGMGSGQPLPMAWQQLVLQEQSPGSQASLATMPEAPDVLEETVTVEEDPGTPTSHVSIVTSEDGTTRRTETKVTKTVKTVTTRTVRQVPVGPDGLPLLDGGPPLGPFADGALDRHFLLRGGGPVATLSRAYLSSGGGFPEGPEPRDSPSYGSLSRGLGMRPPRAGPLGPGPGDGCFTLPGHREAFPVGPEPGPPGGRSLPERFQAEPYGLEDDTRSLAADDEGGPELEPDYGTATRRRPECGRGLHTRAYEDTADDGGELADERPAFPMVTAPLAQPERGSMGSLDRLVRRSPSVDSARKEPRWRDPELPEVLAMLRHPVDPVKANAAAYLQHLCFENEGVKRRVRQLRGLPLLVALLDHPRAEVRRRACGALRNLSYGRDTDNKAAIRDCGGVPALVRLLRAARDNEVRELVTGTLWNLSSYEPLKMVIIDHGLQTLTHEVIVPHSGWEREPNEDSKPRDAEWTTVFKNTSGCLRNVSSDGAEARRRLRECEGLVDALLHALQSAVGRKDTDNKSVENCVCIMRNLSYHVHKEVPGADRYQEAEPGPLGSAVGSQRRRRDDASCFGGKKAKEEWFHQGKKDGEMDRNFDTLDLPKRTEAAKGFELLYQPEVVRLYLSLLTESRNFNTLEAAAGALQNLSAGNWMWATYIRATVRKERGLPVLVELLQSETDKVVRAVAIALRNLSLDRRNKDLIGSYAMAELVRNVRNAQAPPRPGACLEEDTVVAVLNTIHEIVSDSLDNARSLLQARGVPALVALVASSQSVREAKAASHVLQTVWSYKELRGTLQKDGWTKARFQSAAATAKGPKGALSPGGFDDSTLPLVDKSLEGEKTGSRDVIPMDALGPDGYSTVDRRERRPRGASSAGEASEKEPLKLDPSRKAPPPGPSRPAVRLVDAVGDAKPQPVDSWV</sequence>
<proteinExistence type="evidence at protein level"/>
<reference key="1">
    <citation type="journal article" date="1997" name="Genomics">
        <title>Identification of a new human catenin gene family member (ARVCF) from the region deleted in velo-cardio-facial syndrome.</title>
        <authorList>
            <person name="Sirotkin H."/>
            <person name="O'Donnell H."/>
            <person name="DasGupta R."/>
            <person name="Halford S."/>
            <person name="St Jore B."/>
            <person name="Puech A."/>
            <person name="Parimoo S."/>
            <person name="Morrow B."/>
            <person name="Skoultchi A."/>
            <person name="Weissman S."/>
            <person name="Scambler P."/>
            <person name="Kucherlapati R."/>
        </authorList>
    </citation>
    <scope>NUCLEOTIDE SEQUENCE [MRNA] (ISOFORMS LONG AND SHORT)</scope>
</reference>
<reference key="2">
    <citation type="journal article" date="1999" name="Nature">
        <title>The DNA sequence of human chromosome 22.</title>
        <authorList>
            <person name="Dunham I."/>
            <person name="Hunt A.R."/>
            <person name="Collins J.E."/>
            <person name="Bruskiewich R."/>
            <person name="Beare D.M."/>
            <person name="Clamp M."/>
            <person name="Smink L.J."/>
            <person name="Ainscough R."/>
            <person name="Almeida J.P."/>
            <person name="Babbage A.K."/>
            <person name="Bagguley C."/>
            <person name="Bailey J."/>
            <person name="Barlow K.F."/>
            <person name="Bates K.N."/>
            <person name="Beasley O.P."/>
            <person name="Bird C.P."/>
            <person name="Blakey S.E."/>
            <person name="Bridgeman A.M."/>
            <person name="Buck D."/>
            <person name="Burgess J."/>
            <person name="Burrill W.D."/>
            <person name="Burton J."/>
            <person name="Carder C."/>
            <person name="Carter N.P."/>
            <person name="Chen Y."/>
            <person name="Clark G."/>
            <person name="Clegg S.M."/>
            <person name="Cobley V.E."/>
            <person name="Cole C.G."/>
            <person name="Collier R.E."/>
            <person name="Connor R."/>
            <person name="Conroy D."/>
            <person name="Corby N.R."/>
            <person name="Coville G.J."/>
            <person name="Cox A.V."/>
            <person name="Davis J."/>
            <person name="Dawson E."/>
            <person name="Dhami P.D."/>
            <person name="Dockree C."/>
            <person name="Dodsworth S.J."/>
            <person name="Durbin R.M."/>
            <person name="Ellington A.G."/>
            <person name="Evans K.L."/>
            <person name="Fey J.M."/>
            <person name="Fleming K."/>
            <person name="French L."/>
            <person name="Garner A.A."/>
            <person name="Gilbert J.G.R."/>
            <person name="Goward M.E."/>
            <person name="Grafham D.V."/>
            <person name="Griffiths M.N.D."/>
            <person name="Hall C."/>
            <person name="Hall R.E."/>
            <person name="Hall-Tamlyn G."/>
            <person name="Heathcott R.W."/>
            <person name="Ho S."/>
            <person name="Holmes S."/>
            <person name="Hunt S.E."/>
            <person name="Jones M.C."/>
            <person name="Kershaw J."/>
            <person name="Kimberley A.M."/>
            <person name="King A."/>
            <person name="Laird G.K."/>
            <person name="Langford C.F."/>
            <person name="Leversha M.A."/>
            <person name="Lloyd C."/>
            <person name="Lloyd D.M."/>
            <person name="Martyn I.D."/>
            <person name="Mashreghi-Mohammadi M."/>
            <person name="Matthews L.H."/>
            <person name="Mccann O.T."/>
            <person name="Mcclay J."/>
            <person name="Mclaren S."/>
            <person name="McMurray A.A."/>
            <person name="Milne S.A."/>
            <person name="Mortimore B.J."/>
            <person name="Odell C.N."/>
            <person name="Pavitt R."/>
            <person name="Pearce A.V."/>
            <person name="Pearson D."/>
            <person name="Phillimore B.J.C.T."/>
            <person name="Phillips S.H."/>
            <person name="Plumb R.W."/>
            <person name="Ramsay H."/>
            <person name="Ramsey Y."/>
            <person name="Rogers L."/>
            <person name="Ross M.T."/>
            <person name="Scott C.E."/>
            <person name="Sehra H.K."/>
            <person name="Skuce C.D."/>
            <person name="Smalley S."/>
            <person name="Smith M.L."/>
            <person name="Soderlund C."/>
            <person name="Spragon L."/>
            <person name="Steward C.A."/>
            <person name="Sulston J.E."/>
            <person name="Swann R.M."/>
            <person name="Vaudin M."/>
            <person name="Wall M."/>
            <person name="Wallis J.M."/>
            <person name="Whiteley M.N."/>
            <person name="Willey D.L."/>
            <person name="Williams L."/>
            <person name="Williams S.A."/>
            <person name="Williamson H."/>
            <person name="Wilmer T.E."/>
            <person name="Wilming L."/>
            <person name="Wright C.L."/>
            <person name="Hubbard T."/>
            <person name="Bentley D.R."/>
            <person name="Beck S."/>
            <person name="Rogers J."/>
            <person name="Shimizu N."/>
            <person name="Minoshima S."/>
            <person name="Kawasaki K."/>
            <person name="Sasaki T."/>
            <person name="Asakawa S."/>
            <person name="Kudoh J."/>
            <person name="Shintani A."/>
            <person name="Shibuya K."/>
            <person name="Yoshizaki Y."/>
            <person name="Aoki N."/>
            <person name="Mitsuyama S."/>
            <person name="Roe B.A."/>
            <person name="Chen F."/>
            <person name="Chu L."/>
            <person name="Crabtree J."/>
            <person name="Deschamps S."/>
            <person name="Do A."/>
            <person name="Do T."/>
            <person name="Dorman A."/>
            <person name="Fang F."/>
            <person name="Fu Y."/>
            <person name="Hu P."/>
            <person name="Hua A."/>
            <person name="Kenton S."/>
            <person name="Lai H."/>
            <person name="Lao H.I."/>
            <person name="Lewis J."/>
            <person name="Lewis S."/>
            <person name="Lin S.-P."/>
            <person name="Loh P."/>
            <person name="Malaj E."/>
            <person name="Nguyen T."/>
            <person name="Pan H."/>
            <person name="Phan S."/>
            <person name="Qi S."/>
            <person name="Qian Y."/>
            <person name="Ray L."/>
            <person name="Ren Q."/>
            <person name="Shaull S."/>
            <person name="Sloan D."/>
            <person name="Song L."/>
            <person name="Wang Q."/>
            <person name="Wang Y."/>
            <person name="Wang Z."/>
            <person name="White J."/>
            <person name="Willingham D."/>
            <person name="Wu H."/>
            <person name="Yao Z."/>
            <person name="Zhan M."/>
            <person name="Zhang G."/>
            <person name="Chissoe S."/>
            <person name="Murray J."/>
            <person name="Miller N."/>
            <person name="Minx P."/>
            <person name="Fulton R."/>
            <person name="Johnson D."/>
            <person name="Bemis G."/>
            <person name="Bentley D."/>
            <person name="Bradshaw H."/>
            <person name="Bourne S."/>
            <person name="Cordes M."/>
            <person name="Du Z."/>
            <person name="Fulton L."/>
            <person name="Goela D."/>
            <person name="Graves T."/>
            <person name="Hawkins J."/>
            <person name="Hinds K."/>
            <person name="Kemp K."/>
            <person name="Latreille P."/>
            <person name="Layman D."/>
            <person name="Ozersky P."/>
            <person name="Rohlfing T."/>
            <person name="Scheet P."/>
            <person name="Walker C."/>
            <person name="Wamsley A."/>
            <person name="Wohldmann P."/>
            <person name="Pepin K."/>
            <person name="Nelson J."/>
            <person name="Korf I."/>
            <person name="Bedell J.A."/>
            <person name="Hillier L.W."/>
            <person name="Mardis E."/>
            <person name="Waterston R."/>
            <person name="Wilson R."/>
            <person name="Emanuel B.S."/>
            <person name="Shaikh T."/>
            <person name="Kurahashi H."/>
            <person name="Saitta S."/>
            <person name="Budarf M.L."/>
            <person name="McDermid H.E."/>
            <person name="Johnson A."/>
            <person name="Wong A.C.C."/>
            <person name="Morrow B.E."/>
            <person name="Edelmann L."/>
            <person name="Kim U.J."/>
            <person name="Shizuya H."/>
            <person name="Simon M.I."/>
            <person name="Dumanski J.P."/>
            <person name="Peyrard M."/>
            <person name="Kedra D."/>
            <person name="Seroussi E."/>
            <person name="Fransson I."/>
            <person name="Tapia I."/>
            <person name="Bruder C.E."/>
            <person name="O'Brien K.P."/>
            <person name="Wilkinson P."/>
            <person name="Bodenteich A."/>
            <person name="Hartman K."/>
            <person name="Hu X."/>
            <person name="Khan A.S."/>
            <person name="Lane L."/>
            <person name="Tilahun Y."/>
            <person name="Wright H."/>
        </authorList>
    </citation>
    <scope>NUCLEOTIDE SEQUENCE [LARGE SCALE GENOMIC DNA]</scope>
</reference>
<reference key="3">
    <citation type="journal article" date="2000" name="J. Cell Sci.">
        <title>ARVCF localizes to the nucleus and adherens junction and is mutually exclusive with p120(ctn) in E-cadherin complexes.</title>
        <authorList>
            <person name="Mariner D.J."/>
            <person name="Wang J."/>
            <person name="Reynolds A.B."/>
        </authorList>
    </citation>
    <scope>SUBCELLULAR LOCATION</scope>
    <scope>TISSUE SPECIFICITY</scope>
</reference>
<reference key="4">
    <citation type="journal article" date="2008" name="Proc. Natl. Acad. Sci. U.S.A.">
        <title>A quantitative atlas of mitotic phosphorylation.</title>
        <authorList>
            <person name="Dephoure N."/>
            <person name="Zhou C."/>
            <person name="Villen J."/>
            <person name="Beausoleil S.A."/>
            <person name="Bakalarski C.E."/>
            <person name="Elledge S.J."/>
            <person name="Gygi S.P."/>
        </authorList>
    </citation>
    <scope>PHOSPHORYLATION [LARGE SCALE ANALYSIS] AT SER-864</scope>
    <scope>IDENTIFICATION BY MASS SPECTROMETRY [LARGE SCALE ANALYSIS]</scope>
    <source>
        <tissue>Cervix carcinoma</tissue>
    </source>
</reference>
<reference key="5">
    <citation type="journal article" date="2009" name="J. Cell Sci.">
        <title>PDZ-domain-directed basolateral targeting of the peripheral membrane protein FRMPD2 in epithelial cells.</title>
        <authorList>
            <person name="Stenzel N."/>
            <person name="Fetzer C.P."/>
            <person name="Heumann R."/>
            <person name="Erdmann K.S."/>
        </authorList>
    </citation>
    <scope>INTERACTION WITH FRMPD2</scope>
</reference>
<reference key="6">
    <citation type="journal article" date="2009" name="Sci. Signal.">
        <title>Quantitative phosphoproteomic analysis of T cell receptor signaling reveals system-wide modulation of protein-protein interactions.</title>
        <authorList>
            <person name="Mayya V."/>
            <person name="Lundgren D.H."/>
            <person name="Hwang S.-I."/>
            <person name="Rezaul K."/>
            <person name="Wu L."/>
            <person name="Eng J.K."/>
            <person name="Rodionov V."/>
            <person name="Han D.K."/>
        </authorList>
    </citation>
    <scope>PHOSPHORYLATION [LARGE SCALE ANALYSIS] AT SER-871 AND THR-872</scope>
    <scope>VARIANT [LARGE SCALE ANALYSIS] GLN-906</scope>
    <scope>IDENTIFICATION BY MASS SPECTROMETRY [LARGE SCALE ANALYSIS]</scope>
    <source>
        <tissue>Leukemic T-cell</tissue>
    </source>
</reference>
<reference key="7">
    <citation type="journal article" date="2010" name="Sci. Signal.">
        <title>Quantitative phosphoproteomics reveals widespread full phosphorylation site occupancy during mitosis.</title>
        <authorList>
            <person name="Olsen J.V."/>
            <person name="Vermeulen M."/>
            <person name="Santamaria A."/>
            <person name="Kumar C."/>
            <person name="Miller M.L."/>
            <person name="Jensen L.J."/>
            <person name="Gnad F."/>
            <person name="Cox J."/>
            <person name="Jensen T.S."/>
            <person name="Nigg E.A."/>
            <person name="Brunak S."/>
            <person name="Mann M."/>
        </authorList>
    </citation>
    <scope>PHOSPHORYLATION [LARGE SCALE ANALYSIS] AT SER-864</scope>
    <scope>IDENTIFICATION BY MASS SPECTROMETRY [LARGE SCALE ANALYSIS]</scope>
    <source>
        <tissue>Cervix carcinoma</tissue>
    </source>
</reference>
<reference key="8">
    <citation type="journal article" date="2013" name="J. Proteome Res.">
        <title>Toward a comprehensive characterization of a human cancer cell phosphoproteome.</title>
        <authorList>
            <person name="Zhou H."/>
            <person name="Di Palma S."/>
            <person name="Preisinger C."/>
            <person name="Peng M."/>
            <person name="Polat A.N."/>
            <person name="Heck A.J."/>
            <person name="Mohammed S."/>
        </authorList>
    </citation>
    <scope>PHOSPHORYLATION [LARGE SCALE ANALYSIS] AT THR-642; SER-864 AND SER-915</scope>
    <scope>IDENTIFICATION BY MASS SPECTROMETRY [LARGE SCALE ANALYSIS]</scope>
    <source>
        <tissue>Erythroleukemia</tissue>
    </source>
</reference>
<reference key="9">
    <citation type="journal article" date="2014" name="J. Biol. Chem.">
        <title>Nuclear ARVCF protein binds splicing factors and contributes to the regulation of alternative splicing.</title>
        <authorList>
            <person name="Rappe U."/>
            <person name="Schlechter T."/>
            <person name="Aschoff M."/>
            <person name="Hotz-Wagenblatt A."/>
            <person name="Hofmann I."/>
        </authorList>
    </citation>
    <scope>FUNCTION</scope>
    <scope>IDENTIFICATION IN RIBONUCLEOPROTEIN COMPLEX</scope>
    <scope>INTERACTION WITH DDX5; HNRNPH2 AND SRSF1</scope>
    <scope>SUBCELLULAR LOCATION</scope>
</reference>
<reference key="10">
    <citation type="journal article" date="2014" name="J. Proteomics">
        <title>An enzyme assisted RP-RPLC approach for in-depth analysis of human liver phosphoproteome.</title>
        <authorList>
            <person name="Bian Y."/>
            <person name="Song C."/>
            <person name="Cheng K."/>
            <person name="Dong M."/>
            <person name="Wang F."/>
            <person name="Huang J."/>
            <person name="Sun D."/>
            <person name="Wang L."/>
            <person name="Ye M."/>
            <person name="Zou H."/>
        </authorList>
    </citation>
    <scope>PHOSPHORYLATION [LARGE SCALE ANALYSIS] AT THR-102; THR-104; SER-267; SER-332; SER-335; SER-343; SER-345; SER-606 AND THR-642</scope>
    <scope>IDENTIFICATION BY MASS SPECTROMETRY [LARGE SCALE ANALYSIS]</scope>
    <source>
        <tissue>Liver</tissue>
    </source>
</reference>
<reference key="11">
    <citation type="journal article" date="2014" name="Mol. Biol. Cell">
        <title>DIPA-family coiled-coils bind conserved isoform-specific head domain of p120-catenin family: potential roles in hydrocephalus and heterotopia.</title>
        <authorList>
            <person name="Markham N.O."/>
            <person name="Doll C.A."/>
            <person name="Dohn M.R."/>
            <person name="Miller R.K."/>
            <person name="Yu H."/>
            <person name="Coffey R.J."/>
            <person name="McCrea P.D."/>
            <person name="Gamse J.T."/>
            <person name="Reynolds A.B."/>
        </authorList>
    </citation>
    <scope>INTERACTION WITH CCDC85B</scope>
</reference>
<reference key="12">
    <citation type="journal article" date="2017" name="Clin. Exp. Dermatol.">
        <title>Patients with a new variant of endemic pemphigus foliaceus have autoantibodies against arrector pili muscle, colocalizing with MYZAP, p0071, desmoplakins 1 and 2 and ARVCF.</title>
        <authorList>
            <person name="Abreu-Velez A.M."/>
            <person name="Valencia-Yepes C.A."/>
            <person name="Upegui-Zapata Y.A."/>
            <person name="Upegui-Quiceno E."/>
            <person name="Mesa-Herrera N.R."/>
            <person name="Velazquez-Velez J.E."/>
            <person name="Howard M.S."/>
        </authorList>
    </citation>
    <scope>TISSUE SPECIFICITY</scope>
</reference>
<reference key="13">
    <citation type="journal article" date="2018" name="Dermatol. Pract. Concept.">
        <title>Subclinical oral involvement in patients with endemic pemphigus foliaceus.</title>
        <authorList>
            <person name="Abreu-Velez A.M."/>
            <person name="Howard M.S."/>
            <person name="Padilla H.J.L."/>
            <person name="Tobon-Arroyave S."/>
        </authorList>
    </citation>
    <scope>TISSUE SPECIFICITY</scope>
    <scope>SUBCELLULAR LOCATION</scope>
</reference>